<organismHost>
    <name type="scientific">Bos taurus</name>
    <name type="common">Bovine</name>
    <dbReference type="NCBI Taxonomy" id="9913"/>
</organismHost>
<reference key="1">
    <citation type="journal article" date="1990" name="Virology">
        <title>Nucleotide sequence and genome organization of biologically active proviruses of the bovine immunodeficiency-like virus.</title>
        <authorList>
            <person name="Garvey K.J."/>
            <person name="Oberste M.S."/>
            <person name="Elser J.E."/>
            <person name="Braun M.J."/>
            <person name="Gonda M.A."/>
        </authorList>
    </citation>
    <scope>NUCLEOTIDE SEQUENCE [GENOMIC RNA]</scope>
    <source>
        <strain>Isolate R29-106</strain>
        <strain>Isolate R29-127</strain>
    </source>
</reference>
<reference key="2">
    <citation type="submission" date="1992-11" db="EMBL/GenBank/DDBJ databases">
        <authorList>
            <person name="Nadin-Davis S.A."/>
            <person name="Chang S.C."/>
            <person name="Roth J.A."/>
            <person name="Carpenter S."/>
        </authorList>
    </citation>
    <scope>NUCLEOTIDE SEQUENCE [MRNA]</scope>
</reference>
<accession>P24035</accession>
<sequence length="80" mass="9549">MSLLVPVRTHQRHHPVVVELFVWEGTNDPTTEWPPLTRRNIHRLWQYARTLGGDDNVATAQRKLWRKANWLAFLEHVQRT</sequence>
<organism>
    <name type="scientific">Bovine immunodeficiency virus (strain R29)</name>
    <name type="common">BIV</name>
    <name type="synonym">Bovine immunodeficiency-like virus</name>
    <dbReference type="NCBI Taxonomy" id="417296"/>
    <lineage>
        <taxon>Viruses</taxon>
        <taxon>Riboviria</taxon>
        <taxon>Pararnavirae</taxon>
        <taxon>Artverviricota</taxon>
        <taxon>Revtraviricetes</taxon>
        <taxon>Ortervirales</taxon>
        <taxon>Retroviridae</taxon>
        <taxon>Orthoretrovirinae</taxon>
        <taxon>Lentivirus</taxon>
        <taxon>Bovine immunodeficiency virus</taxon>
    </lineage>
</organism>
<dbReference type="EMBL" id="M32690">
    <property type="status" value="NOT_ANNOTATED_CDS"/>
    <property type="molecule type" value="Genomic_RNA"/>
</dbReference>
<dbReference type="EMBL" id="L04974">
    <property type="protein sequence ID" value="AAA42766.1"/>
    <property type="molecule type" value="Genomic_DNA"/>
</dbReference>
<dbReference type="PIR" id="G34742">
    <property type="entry name" value="ASLJBY"/>
</dbReference>
<dbReference type="Proteomes" id="UP000243495">
    <property type="component" value="Segment"/>
</dbReference>
<name>VPY_BIV29</name>
<gene>
    <name type="primary">vpy</name>
</gene>
<feature type="chain" id="PRO_0000085510" description="Protein Vpy">
    <location>
        <begin position="1"/>
        <end position="80"/>
    </location>
</feature>
<proteinExistence type="predicted"/>
<protein>
    <recommendedName>
        <fullName>Protein Vpy</fullName>
    </recommendedName>
</protein>